<proteinExistence type="inferred from homology"/>
<feature type="chain" id="PRO_1000023973" description="Uroporphyrinogen decarboxylase">
    <location>
        <begin position="1"/>
        <end position="354"/>
    </location>
</feature>
<feature type="binding site" evidence="1">
    <location>
        <begin position="27"/>
        <end position="31"/>
    </location>
    <ligand>
        <name>substrate</name>
    </ligand>
</feature>
<feature type="binding site" evidence="1">
    <location>
        <position position="77"/>
    </location>
    <ligand>
        <name>substrate</name>
    </ligand>
</feature>
<feature type="binding site" evidence="1">
    <location>
        <position position="154"/>
    </location>
    <ligand>
        <name>substrate</name>
    </ligand>
</feature>
<feature type="binding site" evidence="1">
    <location>
        <position position="209"/>
    </location>
    <ligand>
        <name>substrate</name>
    </ligand>
</feature>
<feature type="binding site" evidence="1">
    <location>
        <position position="327"/>
    </location>
    <ligand>
        <name>substrate</name>
    </ligand>
</feature>
<feature type="site" description="Transition state stabilizer" evidence="1">
    <location>
        <position position="77"/>
    </location>
</feature>
<evidence type="ECO:0000255" key="1">
    <source>
        <dbReference type="HAMAP-Rule" id="MF_00218"/>
    </source>
</evidence>
<sequence length="354" mass="39206">MAELKNDRYLRALLKQPVDMTPVWMMRQAGRYLPEYKATRAQAGDFMSLCKNHELACEVTLQPLRRYELDAAILFSDILTVPDAMGLGLYFEAGEGPRFERPTDTIDAIKKLAVPDPEDDLGYVMKAVSTIRRELNGQVPLIGFSGSPWTLATYMVEGGSSKTFEKIKKMAYAEPAALHMLLDKLADSVTLYLNAQVANGAQSLMIFDSWGGALSHTAYREFSLRYMQKIVDGLTRFADGRQVPVTLFTKGGGLWLEAMAETGCDALGLDWTVDIADARRRVGHKVALQGNMDPSMLYAPIPRIEEEVAQILAGYGEGTGHVFNLGHGIHQHVDPEHAGAFIKAVHAQSKQYHK</sequence>
<comment type="function">
    <text evidence="1">Catalyzes the decarboxylation of four acetate groups of uroporphyrinogen-III to yield coproporphyrinogen-III.</text>
</comment>
<comment type="catalytic activity">
    <reaction evidence="1">
        <text>uroporphyrinogen III + 4 H(+) = coproporphyrinogen III + 4 CO2</text>
        <dbReference type="Rhea" id="RHEA:19865"/>
        <dbReference type="ChEBI" id="CHEBI:15378"/>
        <dbReference type="ChEBI" id="CHEBI:16526"/>
        <dbReference type="ChEBI" id="CHEBI:57308"/>
        <dbReference type="ChEBI" id="CHEBI:57309"/>
        <dbReference type="EC" id="4.1.1.37"/>
    </reaction>
</comment>
<comment type="pathway">
    <text evidence="1">Porphyrin-containing compound metabolism; protoporphyrin-IX biosynthesis; coproporphyrinogen-III from 5-aminolevulinate: step 4/4.</text>
</comment>
<comment type="subunit">
    <text evidence="1">Homodimer.</text>
</comment>
<comment type="subcellular location">
    <subcellularLocation>
        <location evidence="1">Cytoplasm</location>
    </subcellularLocation>
</comment>
<comment type="similarity">
    <text evidence="1">Belongs to the uroporphyrinogen decarboxylase family.</text>
</comment>
<dbReference type="EC" id="4.1.1.37" evidence="1"/>
<dbReference type="EMBL" id="CP000469">
    <property type="protein sequence ID" value="ABK46678.1"/>
    <property type="molecule type" value="Genomic_DNA"/>
</dbReference>
<dbReference type="RefSeq" id="WP_011621241.1">
    <property type="nucleotide sequence ID" value="NC_008577.1"/>
</dbReference>
<dbReference type="SMR" id="A0KSA9"/>
<dbReference type="STRING" id="94122.Shewana3_0435"/>
<dbReference type="GeneID" id="94726431"/>
<dbReference type="KEGG" id="shn:Shewana3_0435"/>
<dbReference type="eggNOG" id="COG0407">
    <property type="taxonomic scope" value="Bacteria"/>
</dbReference>
<dbReference type="HOGENOM" id="CLU_040933_0_0_6"/>
<dbReference type="OrthoDB" id="9806656at2"/>
<dbReference type="UniPathway" id="UPA00251">
    <property type="reaction ID" value="UER00321"/>
</dbReference>
<dbReference type="Proteomes" id="UP000002589">
    <property type="component" value="Chromosome"/>
</dbReference>
<dbReference type="GO" id="GO:0005829">
    <property type="term" value="C:cytosol"/>
    <property type="evidence" value="ECO:0007669"/>
    <property type="project" value="TreeGrafter"/>
</dbReference>
<dbReference type="GO" id="GO:0004853">
    <property type="term" value="F:uroporphyrinogen decarboxylase activity"/>
    <property type="evidence" value="ECO:0007669"/>
    <property type="project" value="UniProtKB-UniRule"/>
</dbReference>
<dbReference type="GO" id="GO:0019353">
    <property type="term" value="P:protoporphyrinogen IX biosynthetic process from glutamate"/>
    <property type="evidence" value="ECO:0007669"/>
    <property type="project" value="TreeGrafter"/>
</dbReference>
<dbReference type="CDD" id="cd00717">
    <property type="entry name" value="URO-D"/>
    <property type="match status" value="1"/>
</dbReference>
<dbReference type="FunFam" id="3.20.20.210:FF:000001">
    <property type="entry name" value="Uroporphyrinogen decarboxylase"/>
    <property type="match status" value="1"/>
</dbReference>
<dbReference type="Gene3D" id="3.20.20.210">
    <property type="match status" value="1"/>
</dbReference>
<dbReference type="HAMAP" id="MF_00218">
    <property type="entry name" value="URO_D"/>
    <property type="match status" value="1"/>
</dbReference>
<dbReference type="InterPro" id="IPR038071">
    <property type="entry name" value="UROD/MetE-like_sf"/>
</dbReference>
<dbReference type="InterPro" id="IPR006361">
    <property type="entry name" value="Uroporphyrinogen_deCO2ase_HemE"/>
</dbReference>
<dbReference type="InterPro" id="IPR000257">
    <property type="entry name" value="Uroporphyrinogen_deCOase"/>
</dbReference>
<dbReference type="NCBIfam" id="TIGR01464">
    <property type="entry name" value="hemE"/>
    <property type="match status" value="1"/>
</dbReference>
<dbReference type="PANTHER" id="PTHR21091">
    <property type="entry name" value="METHYLTETRAHYDROFOLATE:HOMOCYSTEINE METHYLTRANSFERASE RELATED"/>
    <property type="match status" value="1"/>
</dbReference>
<dbReference type="PANTHER" id="PTHR21091:SF169">
    <property type="entry name" value="UROPORPHYRINOGEN DECARBOXYLASE"/>
    <property type="match status" value="1"/>
</dbReference>
<dbReference type="Pfam" id="PF01208">
    <property type="entry name" value="URO-D"/>
    <property type="match status" value="1"/>
</dbReference>
<dbReference type="SUPFAM" id="SSF51726">
    <property type="entry name" value="UROD/MetE-like"/>
    <property type="match status" value="1"/>
</dbReference>
<dbReference type="PROSITE" id="PS00906">
    <property type="entry name" value="UROD_1"/>
    <property type="match status" value="1"/>
</dbReference>
<dbReference type="PROSITE" id="PS00907">
    <property type="entry name" value="UROD_2"/>
    <property type="match status" value="1"/>
</dbReference>
<gene>
    <name evidence="1" type="primary">hemE</name>
    <name type="ordered locus">Shewana3_0435</name>
</gene>
<keyword id="KW-0963">Cytoplasm</keyword>
<keyword id="KW-0210">Decarboxylase</keyword>
<keyword id="KW-0456">Lyase</keyword>
<keyword id="KW-0627">Porphyrin biosynthesis</keyword>
<reference key="1">
    <citation type="submission" date="2006-09" db="EMBL/GenBank/DDBJ databases">
        <title>Complete sequence of chromosome 1 of Shewanella sp. ANA-3.</title>
        <authorList>
            <person name="Copeland A."/>
            <person name="Lucas S."/>
            <person name="Lapidus A."/>
            <person name="Barry K."/>
            <person name="Detter J.C."/>
            <person name="Glavina del Rio T."/>
            <person name="Hammon N."/>
            <person name="Israni S."/>
            <person name="Dalin E."/>
            <person name="Tice H."/>
            <person name="Pitluck S."/>
            <person name="Chertkov O."/>
            <person name="Brettin T."/>
            <person name="Bruce D."/>
            <person name="Han C."/>
            <person name="Tapia R."/>
            <person name="Gilna P."/>
            <person name="Schmutz J."/>
            <person name="Larimer F."/>
            <person name="Land M."/>
            <person name="Hauser L."/>
            <person name="Kyrpides N."/>
            <person name="Kim E."/>
            <person name="Newman D."/>
            <person name="Salticov C."/>
            <person name="Konstantinidis K."/>
            <person name="Klappenback J."/>
            <person name="Tiedje J."/>
            <person name="Richardson P."/>
        </authorList>
    </citation>
    <scope>NUCLEOTIDE SEQUENCE [LARGE SCALE GENOMIC DNA]</scope>
    <source>
        <strain>ANA-3</strain>
    </source>
</reference>
<organism>
    <name type="scientific">Shewanella sp. (strain ANA-3)</name>
    <dbReference type="NCBI Taxonomy" id="94122"/>
    <lineage>
        <taxon>Bacteria</taxon>
        <taxon>Pseudomonadati</taxon>
        <taxon>Pseudomonadota</taxon>
        <taxon>Gammaproteobacteria</taxon>
        <taxon>Alteromonadales</taxon>
        <taxon>Shewanellaceae</taxon>
        <taxon>Shewanella</taxon>
    </lineage>
</organism>
<protein>
    <recommendedName>
        <fullName evidence="1">Uroporphyrinogen decarboxylase</fullName>
        <shortName evidence="1">UPD</shortName>
        <shortName evidence="1">URO-D</shortName>
        <ecNumber evidence="1">4.1.1.37</ecNumber>
    </recommendedName>
</protein>
<name>DCUP_SHESA</name>
<accession>A0KSA9</accession>